<organism>
    <name type="scientific">Moorella thermoacetica (strain ATCC 39073 / JCM 9320)</name>
    <dbReference type="NCBI Taxonomy" id="264732"/>
    <lineage>
        <taxon>Bacteria</taxon>
        <taxon>Bacillati</taxon>
        <taxon>Bacillota</taxon>
        <taxon>Clostridia</taxon>
        <taxon>Moorellales</taxon>
        <taxon>Moorellaceae</taxon>
        <taxon>Moorella</taxon>
    </lineage>
</organism>
<proteinExistence type="inferred from homology"/>
<name>Y1643_MOOTA</name>
<accession>Q2RHZ4</accession>
<feature type="chain" id="PRO_0000236642" description="UPF0297 protein Moth_1643">
    <location>
        <begin position="1"/>
        <end position="83"/>
    </location>
</feature>
<evidence type="ECO:0000255" key="1">
    <source>
        <dbReference type="HAMAP-Rule" id="MF_01507"/>
    </source>
</evidence>
<evidence type="ECO:0000305" key="2"/>
<protein>
    <recommendedName>
        <fullName evidence="1">UPF0297 protein Moth_1643</fullName>
    </recommendedName>
</protein>
<gene>
    <name type="ordered locus">Moth_1643</name>
</gene>
<reference key="1">
    <citation type="journal article" date="2008" name="Environ. Microbiol.">
        <title>The complete genome sequence of Moorella thermoacetica (f. Clostridium thermoaceticum).</title>
        <authorList>
            <person name="Pierce E."/>
            <person name="Xie G."/>
            <person name="Barabote R.D."/>
            <person name="Saunders E."/>
            <person name="Han C.S."/>
            <person name="Detter J.C."/>
            <person name="Richardson P."/>
            <person name="Brettin T.S."/>
            <person name="Das A."/>
            <person name="Ljungdahl L.G."/>
            <person name="Ragsdale S.W."/>
        </authorList>
    </citation>
    <scope>NUCLEOTIDE SEQUENCE [LARGE SCALE GENOMIC DNA]</scope>
    <source>
        <strain>ATCC 39073 / JCM 9320</strain>
    </source>
</reference>
<dbReference type="EMBL" id="CP000232">
    <property type="protein sequence ID" value="ABC19945.1"/>
    <property type="status" value="ALT_INIT"/>
    <property type="molecule type" value="Genomic_DNA"/>
</dbReference>
<dbReference type="RefSeq" id="YP_430488.1">
    <property type="nucleotide sequence ID" value="NC_007644.1"/>
</dbReference>
<dbReference type="SMR" id="Q2RHZ4"/>
<dbReference type="STRING" id="264732.Moth_1643"/>
<dbReference type="EnsemblBacteria" id="ABC19945">
    <property type="protein sequence ID" value="ABC19945"/>
    <property type="gene ID" value="Moth_1643"/>
</dbReference>
<dbReference type="KEGG" id="mta:Moth_1643"/>
<dbReference type="PATRIC" id="fig|264732.11.peg.1781"/>
<dbReference type="eggNOG" id="COG4472">
    <property type="taxonomic scope" value="Bacteria"/>
</dbReference>
<dbReference type="HOGENOM" id="CLU_162466_0_0_9"/>
<dbReference type="OrthoDB" id="9796303at2"/>
<dbReference type="HAMAP" id="MF_01507">
    <property type="entry name" value="UPF0297"/>
    <property type="match status" value="1"/>
</dbReference>
<dbReference type="InterPro" id="IPR009309">
    <property type="entry name" value="IreB"/>
</dbReference>
<dbReference type="NCBIfam" id="NF003997">
    <property type="entry name" value="PRK05473.1"/>
    <property type="match status" value="1"/>
</dbReference>
<dbReference type="PANTHER" id="PTHR40067">
    <property type="entry name" value="UPF0297 PROTEIN YRZL"/>
    <property type="match status" value="1"/>
</dbReference>
<dbReference type="PANTHER" id="PTHR40067:SF1">
    <property type="entry name" value="UPF0297 PROTEIN YRZL"/>
    <property type="match status" value="1"/>
</dbReference>
<dbReference type="Pfam" id="PF06135">
    <property type="entry name" value="IreB"/>
    <property type="match status" value="1"/>
</dbReference>
<dbReference type="PIRSF" id="PIRSF037258">
    <property type="entry name" value="DUF965_bac"/>
    <property type="match status" value="1"/>
</dbReference>
<comment type="similarity">
    <text evidence="1">Belongs to the UPF0297 family.</text>
</comment>
<comment type="sequence caution" evidence="2">
    <conflict type="erroneous initiation">
        <sequence resource="EMBL-CDS" id="ABC19945"/>
    </conflict>
</comment>
<sequence length="83" mass="9497">MPGDMQETMMFKVEKEEKVRVRDVLTEVQAALTEKGYDPINQLIGYLLSGDPAYITSHKGARNLIRRVERDEILAELLKSYLA</sequence>